<keyword id="KW-0002">3D-structure</keyword>
<keyword id="KW-0030">Aminoacyl-tRNA synthetase</keyword>
<keyword id="KW-0067">ATP-binding</keyword>
<keyword id="KW-0963">Cytoplasm</keyword>
<keyword id="KW-0436">Ligase</keyword>
<keyword id="KW-0460">Magnesium</keyword>
<keyword id="KW-0479">Metal-binding</keyword>
<keyword id="KW-0547">Nucleotide-binding</keyword>
<keyword id="KW-0648">Protein biosynthesis</keyword>
<keyword id="KW-0694">RNA-binding</keyword>
<keyword id="KW-0820">tRNA-binding</keyword>
<dbReference type="EC" id="6.1.1.20" evidence="1"/>
<dbReference type="EMBL" id="CR626927">
    <property type="protein sequence ID" value="CAH08290.1"/>
    <property type="molecule type" value="Genomic_DNA"/>
</dbReference>
<dbReference type="RefSeq" id="WP_005788108.1">
    <property type="nucleotide sequence ID" value="NZ_UFTH01000001.1"/>
</dbReference>
<dbReference type="PDB" id="3IG2">
    <property type="method" value="X-ray"/>
    <property type="resolution" value="2.09 A"/>
    <property type="chains" value="A/B/C/D=504-713"/>
</dbReference>
<dbReference type="PDBsum" id="3IG2"/>
<dbReference type="SMR" id="Q5LC76"/>
<dbReference type="PaxDb" id="272559-BF9343_2509"/>
<dbReference type="DNASU" id="3287358"/>
<dbReference type="GeneID" id="60366636"/>
<dbReference type="KEGG" id="bfs:BF9343_2509"/>
<dbReference type="eggNOG" id="COG0072">
    <property type="taxonomic scope" value="Bacteria"/>
</dbReference>
<dbReference type="eggNOG" id="COG0073">
    <property type="taxonomic scope" value="Bacteria"/>
</dbReference>
<dbReference type="HOGENOM" id="CLU_016891_0_0_10"/>
<dbReference type="EvolutionaryTrace" id="Q5LC76"/>
<dbReference type="Proteomes" id="UP000006731">
    <property type="component" value="Chromosome"/>
</dbReference>
<dbReference type="GO" id="GO:0009328">
    <property type="term" value="C:phenylalanine-tRNA ligase complex"/>
    <property type="evidence" value="ECO:0007669"/>
    <property type="project" value="TreeGrafter"/>
</dbReference>
<dbReference type="GO" id="GO:0005524">
    <property type="term" value="F:ATP binding"/>
    <property type="evidence" value="ECO:0007669"/>
    <property type="project" value="UniProtKB-UniRule"/>
</dbReference>
<dbReference type="GO" id="GO:0000287">
    <property type="term" value="F:magnesium ion binding"/>
    <property type="evidence" value="ECO:0007669"/>
    <property type="project" value="UniProtKB-UniRule"/>
</dbReference>
<dbReference type="GO" id="GO:0004826">
    <property type="term" value="F:phenylalanine-tRNA ligase activity"/>
    <property type="evidence" value="ECO:0007669"/>
    <property type="project" value="UniProtKB-UniRule"/>
</dbReference>
<dbReference type="GO" id="GO:0000049">
    <property type="term" value="F:tRNA binding"/>
    <property type="evidence" value="ECO:0007669"/>
    <property type="project" value="UniProtKB-KW"/>
</dbReference>
<dbReference type="GO" id="GO:0006432">
    <property type="term" value="P:phenylalanyl-tRNA aminoacylation"/>
    <property type="evidence" value="ECO:0007669"/>
    <property type="project" value="UniProtKB-UniRule"/>
</dbReference>
<dbReference type="CDD" id="cd00769">
    <property type="entry name" value="PheRS_beta_core"/>
    <property type="match status" value="1"/>
</dbReference>
<dbReference type="CDD" id="cd02796">
    <property type="entry name" value="tRNA_bind_bactPheRS"/>
    <property type="match status" value="1"/>
</dbReference>
<dbReference type="FunFam" id="2.40.50.140:FF:000045">
    <property type="entry name" value="Phenylalanine--tRNA ligase beta subunit"/>
    <property type="match status" value="1"/>
</dbReference>
<dbReference type="FunFam" id="3.30.56.10:FF:000013">
    <property type="entry name" value="Phenylalanine--tRNA ligase beta subunit"/>
    <property type="match status" value="1"/>
</dbReference>
<dbReference type="FunFam" id="3.30.70.380:FF:000001">
    <property type="entry name" value="Phenylalanine--tRNA ligase beta subunit"/>
    <property type="match status" value="1"/>
</dbReference>
<dbReference type="FunFam" id="3.50.40.10:FF:000001">
    <property type="entry name" value="Phenylalanine--tRNA ligase beta subunit"/>
    <property type="match status" value="1"/>
</dbReference>
<dbReference type="Gene3D" id="3.30.56.10">
    <property type="match status" value="2"/>
</dbReference>
<dbReference type="Gene3D" id="3.30.930.10">
    <property type="entry name" value="Bira Bifunctional Protein, Domain 2"/>
    <property type="match status" value="1"/>
</dbReference>
<dbReference type="Gene3D" id="3.30.70.380">
    <property type="entry name" value="Ferrodoxin-fold anticodon-binding domain"/>
    <property type="match status" value="1"/>
</dbReference>
<dbReference type="Gene3D" id="2.40.50.140">
    <property type="entry name" value="Nucleic acid-binding proteins"/>
    <property type="match status" value="1"/>
</dbReference>
<dbReference type="Gene3D" id="3.50.40.10">
    <property type="entry name" value="Phenylalanyl-trna Synthetase, Chain B, domain 3"/>
    <property type="match status" value="1"/>
</dbReference>
<dbReference type="HAMAP" id="MF_00283">
    <property type="entry name" value="Phe_tRNA_synth_beta1"/>
    <property type="match status" value="1"/>
</dbReference>
<dbReference type="InterPro" id="IPR045864">
    <property type="entry name" value="aa-tRNA-synth_II/BPL/LPL"/>
</dbReference>
<dbReference type="InterPro" id="IPR005146">
    <property type="entry name" value="B3/B4_tRNA-bd"/>
</dbReference>
<dbReference type="InterPro" id="IPR009061">
    <property type="entry name" value="DNA-bd_dom_put_sf"/>
</dbReference>
<dbReference type="InterPro" id="IPR005121">
    <property type="entry name" value="Fdx_antiC-bd"/>
</dbReference>
<dbReference type="InterPro" id="IPR036690">
    <property type="entry name" value="Fdx_antiC-bd_sf"/>
</dbReference>
<dbReference type="InterPro" id="IPR012340">
    <property type="entry name" value="NA-bd_OB-fold"/>
</dbReference>
<dbReference type="InterPro" id="IPR045060">
    <property type="entry name" value="Phe-tRNA-ligase_IIc_bsu"/>
</dbReference>
<dbReference type="InterPro" id="IPR004532">
    <property type="entry name" value="Phe-tRNA-ligase_IIc_bsu_bact"/>
</dbReference>
<dbReference type="InterPro" id="IPR020825">
    <property type="entry name" value="Phe-tRNA_synthase-like_B3/B4"/>
</dbReference>
<dbReference type="InterPro" id="IPR041616">
    <property type="entry name" value="PheRS_beta_core"/>
</dbReference>
<dbReference type="InterPro" id="IPR002547">
    <property type="entry name" value="tRNA-bd_dom"/>
</dbReference>
<dbReference type="InterPro" id="IPR033714">
    <property type="entry name" value="tRNA_bind_bactPheRS"/>
</dbReference>
<dbReference type="InterPro" id="IPR005147">
    <property type="entry name" value="tRNA_synthase_B5-dom"/>
</dbReference>
<dbReference type="NCBIfam" id="TIGR00472">
    <property type="entry name" value="pheT_bact"/>
    <property type="match status" value="1"/>
</dbReference>
<dbReference type="NCBIfam" id="NF045760">
    <property type="entry name" value="YtpR"/>
    <property type="match status" value="1"/>
</dbReference>
<dbReference type="PANTHER" id="PTHR10947:SF0">
    <property type="entry name" value="PHENYLALANINE--TRNA LIGASE BETA SUBUNIT"/>
    <property type="match status" value="1"/>
</dbReference>
<dbReference type="PANTHER" id="PTHR10947">
    <property type="entry name" value="PHENYLALANYL-TRNA SYNTHETASE BETA CHAIN AND LEUCINE-RICH REPEAT-CONTAINING PROTEIN 47"/>
    <property type="match status" value="1"/>
</dbReference>
<dbReference type="Pfam" id="PF03483">
    <property type="entry name" value="B3_4"/>
    <property type="match status" value="1"/>
</dbReference>
<dbReference type="Pfam" id="PF03484">
    <property type="entry name" value="B5"/>
    <property type="match status" value="1"/>
</dbReference>
<dbReference type="Pfam" id="PF03147">
    <property type="entry name" value="FDX-ACB"/>
    <property type="match status" value="1"/>
</dbReference>
<dbReference type="Pfam" id="PF01588">
    <property type="entry name" value="tRNA_bind"/>
    <property type="match status" value="1"/>
</dbReference>
<dbReference type="Pfam" id="PF17759">
    <property type="entry name" value="tRNA_synthFbeta"/>
    <property type="match status" value="1"/>
</dbReference>
<dbReference type="SMART" id="SM00873">
    <property type="entry name" value="B3_4"/>
    <property type="match status" value="1"/>
</dbReference>
<dbReference type="SMART" id="SM00874">
    <property type="entry name" value="B5"/>
    <property type="match status" value="1"/>
</dbReference>
<dbReference type="SMART" id="SM00896">
    <property type="entry name" value="FDX-ACB"/>
    <property type="match status" value="1"/>
</dbReference>
<dbReference type="SUPFAM" id="SSF54991">
    <property type="entry name" value="Anticodon-binding domain of PheRS"/>
    <property type="match status" value="1"/>
</dbReference>
<dbReference type="SUPFAM" id="SSF55681">
    <property type="entry name" value="Class II aaRS and biotin synthetases"/>
    <property type="match status" value="1"/>
</dbReference>
<dbReference type="SUPFAM" id="SSF50249">
    <property type="entry name" value="Nucleic acid-binding proteins"/>
    <property type="match status" value="1"/>
</dbReference>
<dbReference type="SUPFAM" id="SSF56037">
    <property type="entry name" value="PheT/TilS domain"/>
    <property type="match status" value="1"/>
</dbReference>
<dbReference type="SUPFAM" id="SSF46955">
    <property type="entry name" value="Putative DNA-binding domain"/>
    <property type="match status" value="1"/>
</dbReference>
<dbReference type="PROSITE" id="PS51483">
    <property type="entry name" value="B5"/>
    <property type="match status" value="1"/>
</dbReference>
<dbReference type="PROSITE" id="PS51447">
    <property type="entry name" value="FDX_ACB"/>
    <property type="match status" value="1"/>
</dbReference>
<dbReference type="PROSITE" id="PS50886">
    <property type="entry name" value="TRBD"/>
    <property type="match status" value="1"/>
</dbReference>
<gene>
    <name evidence="1" type="primary">pheT</name>
    <name type="ordered locus">BF2590</name>
</gene>
<feature type="chain" id="PRO_0000232046" description="Phenylalanine--tRNA ligase beta subunit">
    <location>
        <begin position="1"/>
        <end position="820"/>
    </location>
</feature>
<feature type="domain" description="tRNA-binding" evidence="1">
    <location>
        <begin position="42"/>
        <end position="154"/>
    </location>
</feature>
<feature type="domain" description="B5" evidence="1">
    <location>
        <begin position="413"/>
        <end position="489"/>
    </location>
</feature>
<feature type="domain" description="FDX-ACB" evidence="1">
    <location>
        <begin position="727"/>
        <end position="820"/>
    </location>
</feature>
<feature type="binding site" evidence="1">
    <location>
        <position position="467"/>
    </location>
    <ligand>
        <name>Mg(2+)</name>
        <dbReference type="ChEBI" id="CHEBI:18420"/>
        <note>shared with alpha subunit</note>
    </ligand>
</feature>
<feature type="binding site" evidence="1">
    <location>
        <position position="473"/>
    </location>
    <ligand>
        <name>Mg(2+)</name>
        <dbReference type="ChEBI" id="CHEBI:18420"/>
        <note>shared with alpha subunit</note>
    </ligand>
</feature>
<feature type="binding site" evidence="1">
    <location>
        <position position="476"/>
    </location>
    <ligand>
        <name>Mg(2+)</name>
        <dbReference type="ChEBI" id="CHEBI:18420"/>
        <note>shared with alpha subunit</note>
    </ligand>
</feature>
<feature type="binding site" evidence="1">
    <location>
        <position position="477"/>
    </location>
    <ligand>
        <name>Mg(2+)</name>
        <dbReference type="ChEBI" id="CHEBI:18420"/>
        <note>shared with alpha subunit</note>
    </ligand>
</feature>
<feature type="helix" evidence="2">
    <location>
        <begin position="505"/>
        <end position="519"/>
    </location>
</feature>
<feature type="strand" evidence="2">
    <location>
        <begin position="529"/>
        <end position="531"/>
    </location>
</feature>
<feature type="helix" evidence="2">
    <location>
        <begin position="533"/>
        <end position="536"/>
    </location>
</feature>
<feature type="strand" evidence="2">
    <location>
        <begin position="540"/>
        <end position="542"/>
    </location>
</feature>
<feature type="helix" evidence="2">
    <location>
        <begin position="544"/>
        <end position="546"/>
    </location>
</feature>
<feature type="strand" evidence="2">
    <location>
        <begin position="548"/>
        <end position="552"/>
    </location>
</feature>
<feature type="helix" evidence="2">
    <location>
        <begin position="553"/>
        <end position="555"/>
    </location>
</feature>
<feature type="helix" evidence="2">
    <location>
        <begin position="566"/>
        <end position="575"/>
    </location>
</feature>
<feature type="strand" evidence="2">
    <location>
        <begin position="579"/>
        <end position="582"/>
    </location>
</feature>
<feature type="strand" evidence="2">
    <location>
        <begin position="585"/>
        <end position="595"/>
    </location>
</feature>
<feature type="strand" evidence="2">
    <location>
        <begin position="609"/>
        <end position="623"/>
    </location>
</feature>
<feature type="helix" evidence="2">
    <location>
        <begin position="634"/>
        <end position="650"/>
    </location>
</feature>
<feature type="helix" evidence="2">
    <location>
        <begin position="655"/>
        <end position="657"/>
    </location>
</feature>
<feature type="strand" evidence="2">
    <location>
        <begin position="659"/>
        <end position="663"/>
    </location>
</feature>
<feature type="strand" evidence="2">
    <location>
        <begin position="665"/>
        <end position="675"/>
    </location>
</feature>
<feature type="strand" evidence="2">
    <location>
        <begin position="681"/>
        <end position="688"/>
    </location>
</feature>
<feature type="helix" evidence="2">
    <location>
        <begin position="690"/>
        <end position="695"/>
    </location>
</feature>
<feature type="strand" evidence="2">
    <location>
        <begin position="700"/>
        <end position="708"/>
    </location>
</feature>
<feature type="helix" evidence="2">
    <location>
        <begin position="710"/>
        <end position="712"/>
    </location>
</feature>
<evidence type="ECO:0000255" key="1">
    <source>
        <dbReference type="HAMAP-Rule" id="MF_00283"/>
    </source>
</evidence>
<evidence type="ECO:0007829" key="2">
    <source>
        <dbReference type="PDB" id="3IG2"/>
    </source>
</evidence>
<accession>Q5LC76</accession>
<protein>
    <recommendedName>
        <fullName evidence="1">Phenylalanine--tRNA ligase beta subunit</fullName>
        <ecNumber evidence="1">6.1.1.20</ecNumber>
    </recommendedName>
    <alternativeName>
        <fullName evidence="1">Phenylalanyl-tRNA synthetase beta subunit</fullName>
        <shortName evidence="1">PheRS</shortName>
    </alternativeName>
</protein>
<sequence length="820" mass="90708">MNISYNWLKEYVNFDLTPDEVAAALTSIGLETGGVEEVQTIKGGLEGLVIGEVLTCVEHPNSDHLHITTVNLGNGEPTQIVCGAPNVAAGQKVVVATLGTKLYDGDECFTIKKSKIRGVESIGMICAEDEIGIGTSHDGIIVLPEDAVPGTLAKDYYNVKSDYVLEVDITPNRADACSHYGVARDLYAYLVQNGKQAALTRPSVDAFAVENHDLDIKVTVENSEACPRYAGVTVKGVTVKESPEWLQNKLRIIGLRPINNVVDITNYIVHAFGQPLHCFDANKIKGGEVIVKTMPEGTTFVTLDGVERKLNERDLMICNKEDAMCIAGVFGGLDSGSTEATTDVFLESAYFHPTWVRKTARRHGLNTDASFRFERGIDPNITIYCLKLAAMMVKELAGGTISSEIKDVCAAPAQDFIVELTYEKVHSLIGKVIPVETIKSIVTSLEMKIMDETAEGLTLAVPPYRVDVQRDCDVIEDILRIYGYNNVEIPSTLKSSLTTKGDCDKSNKLQNLVAEQLVGCGFNEILNNSLTRAAYYDGLESYPSKNLVMLLNPLSADLNCMRQTLLFGGLESIAHNANRKNADLKFFEFGNCYHFDAEKKNPEKVLAPYSEDYHLGLWVTGKMVSNSWAHADENTSVYELKAYVENIFKRLGLDLHSLVVGNLSDDIYSTALTVNTKGGKRLATFGVVTKKMLKAFDVDNEVYYADLNWKELMKAIRSVKVSYKEISKFPAVKRDLALLLDKKVQFAEIEKIAYETEKKLLKEVSLFDVYEGKNLEAGKKSYAVSFLLQDESQTLNDKMIDKIMSKLVKNLEDKLGAKLR</sequence>
<proteinExistence type="evidence at protein level"/>
<organism>
    <name type="scientific">Bacteroides fragilis (strain ATCC 25285 / DSM 2151 / CCUG 4856 / JCM 11019 / LMG 10263 / NCTC 9343 / Onslow / VPI 2553 / EN-2)</name>
    <dbReference type="NCBI Taxonomy" id="272559"/>
    <lineage>
        <taxon>Bacteria</taxon>
        <taxon>Pseudomonadati</taxon>
        <taxon>Bacteroidota</taxon>
        <taxon>Bacteroidia</taxon>
        <taxon>Bacteroidales</taxon>
        <taxon>Bacteroidaceae</taxon>
        <taxon>Bacteroides</taxon>
    </lineage>
</organism>
<reference key="1">
    <citation type="journal article" date="2005" name="Science">
        <title>Extensive DNA inversions in the B. fragilis genome control variable gene expression.</title>
        <authorList>
            <person name="Cerdeno-Tarraga A.-M."/>
            <person name="Patrick S."/>
            <person name="Crossman L.C."/>
            <person name="Blakely G."/>
            <person name="Abratt V."/>
            <person name="Lennard N."/>
            <person name="Poxton I."/>
            <person name="Duerden B."/>
            <person name="Harris B."/>
            <person name="Quail M.A."/>
            <person name="Barron A."/>
            <person name="Clark L."/>
            <person name="Corton C."/>
            <person name="Doggett J."/>
            <person name="Holden M.T.G."/>
            <person name="Larke N."/>
            <person name="Line A."/>
            <person name="Lord A."/>
            <person name="Norbertczak H."/>
            <person name="Ormond D."/>
            <person name="Price C."/>
            <person name="Rabbinowitsch E."/>
            <person name="Woodward J."/>
            <person name="Barrell B.G."/>
            <person name="Parkhill J."/>
        </authorList>
    </citation>
    <scope>NUCLEOTIDE SEQUENCE [LARGE SCALE GENOMIC DNA]</scope>
    <source>
        <strain>ATCC 25285 / DSM 2151 / CCUG 4856 / JCM 11019 / LMG 10263 / NCTC 9343 / Onslow / VPI 2553 / EN-2</strain>
    </source>
</reference>
<name>SYFB_BACFN</name>
<comment type="catalytic activity">
    <reaction evidence="1">
        <text>tRNA(Phe) + L-phenylalanine + ATP = L-phenylalanyl-tRNA(Phe) + AMP + diphosphate + H(+)</text>
        <dbReference type="Rhea" id="RHEA:19413"/>
        <dbReference type="Rhea" id="RHEA-COMP:9668"/>
        <dbReference type="Rhea" id="RHEA-COMP:9699"/>
        <dbReference type="ChEBI" id="CHEBI:15378"/>
        <dbReference type="ChEBI" id="CHEBI:30616"/>
        <dbReference type="ChEBI" id="CHEBI:33019"/>
        <dbReference type="ChEBI" id="CHEBI:58095"/>
        <dbReference type="ChEBI" id="CHEBI:78442"/>
        <dbReference type="ChEBI" id="CHEBI:78531"/>
        <dbReference type="ChEBI" id="CHEBI:456215"/>
        <dbReference type="EC" id="6.1.1.20"/>
    </reaction>
</comment>
<comment type="cofactor">
    <cofactor evidence="1">
        <name>Mg(2+)</name>
        <dbReference type="ChEBI" id="CHEBI:18420"/>
    </cofactor>
    <text evidence="1">Binds 2 magnesium ions per tetramer.</text>
</comment>
<comment type="subunit">
    <text evidence="1">Tetramer of two alpha and two beta subunits.</text>
</comment>
<comment type="subcellular location">
    <subcellularLocation>
        <location evidence="1">Cytoplasm</location>
    </subcellularLocation>
</comment>
<comment type="similarity">
    <text evidence="1">Belongs to the phenylalanyl-tRNA synthetase beta subunit family. Type 1 subfamily.</text>
</comment>